<comment type="function">
    <text evidence="3">Counteracts the mitogenic function of Ras, at least partly because it can interact with Ras GAPs and RAF in a competitive manner. Together with ITGB1BP1, regulates KRIT1 localization to microtubules and membranes (By similarity). Plays a role in nerve growth factor (NGF)-induced neurite outgrowth. Plays a role in the regulation of embryonic blood vessel formation. Involved in the establishment of basal endothelial barrier function. Facilitates the progressive accumulation of CDH1 at mature desmosome junctions via cAMP-dependent signaling and its interaction with PKP3 (By similarity). May be involved in the regulation of the vascular endothelial growth factor receptor KDR expression at endothelial cell-cell junctions (By similarity).</text>
</comment>
<comment type="catalytic activity">
    <reaction evidence="2">
        <text>GTP + H2O = GDP + phosphate + H(+)</text>
        <dbReference type="Rhea" id="RHEA:19669"/>
        <dbReference type="ChEBI" id="CHEBI:15377"/>
        <dbReference type="ChEBI" id="CHEBI:15378"/>
        <dbReference type="ChEBI" id="CHEBI:37565"/>
        <dbReference type="ChEBI" id="CHEBI:43474"/>
        <dbReference type="ChEBI" id="CHEBI:58189"/>
        <dbReference type="EC" id="3.6.5.2"/>
    </reaction>
</comment>
<comment type="activity regulation">
    <text evidence="1">Activated by guanine nucleotide-exchange factors (GEF) EPAC and EPAC2 in a cAMP-dependent manner, and GFR.</text>
</comment>
<comment type="subunit">
    <text evidence="3 4">Found in a complex, at least composed of ITGB1BP1, KRIT1 and RAP1A. Interacts (active GTP-bound form preferentially) with KRIT1 (via C-terminus FERM domain); the interaction does not induce the opening conformation of KRIT1. Found in a complex composed of CDH1, RAP1A and PKP3; PKP3 acts as a scaffold protein within the complex, the complex is required for CDH1 localization to mature desmosome cell junctions (By similarity). In its GTP-bound form interacts with PLCE1 and RADIL. Interacts with SGSM1, SGSM2 and SGSM3. Interacts (via GTP-bound active form) with RAPGEF2 (via Ras-associating domain) (By similarity). Interacts with TBC1D21 (By similarity). Interacts with RAP1GDS1 (By similarity).</text>
</comment>
<comment type="subcellular location">
    <subcellularLocation>
        <location>Cell membrane</location>
        <topology>Lipid-anchor</topology>
    </subcellularLocation>
    <subcellularLocation>
        <location>Cytoplasm</location>
    </subcellularLocation>
    <subcellularLocation>
        <location evidence="1">Cytoplasm</location>
        <location evidence="1">Perinuclear region</location>
    </subcellularLocation>
    <subcellularLocation>
        <location evidence="1">Cell junction</location>
    </subcellularLocation>
    <subcellularLocation>
        <location evidence="1">Early endosome</location>
    </subcellularLocation>
    <text evidence="1">Recruited from early endosome to late endosome compartment after nerve growth factor (NGF) stimulation. Localized with RAPGEF2 at cell-cell junctions. Colocalized with RAPGEF2 in the perinuclear region (By similarity).</text>
</comment>
<comment type="similarity">
    <text evidence="5">Belongs to the small GTPase superfamily. Ras family.</text>
</comment>
<proteinExistence type="evidence at protein level"/>
<name>RAP1A_BOVIN</name>
<feature type="chain" id="PRO_0000030197" description="Ras-related protein Rap-1A">
    <location>
        <begin position="1"/>
        <end position="181"/>
    </location>
</feature>
<feature type="propeptide" id="PRO_0000030198" description="Removed in mature form" evidence="1">
    <location>
        <begin position="182"/>
        <end position="184"/>
    </location>
</feature>
<feature type="short sequence motif" description="Effector region" evidence="5">
    <location>
        <begin position="32"/>
        <end position="40"/>
    </location>
</feature>
<feature type="binding site" evidence="3">
    <location>
        <begin position="10"/>
        <end position="18"/>
    </location>
    <ligand>
        <name>GTP</name>
        <dbReference type="ChEBI" id="CHEBI:37565"/>
    </ligand>
</feature>
<feature type="binding site" evidence="3">
    <location>
        <begin position="29"/>
        <end position="35"/>
    </location>
    <ligand>
        <name>GTP</name>
        <dbReference type="ChEBI" id="CHEBI:37565"/>
    </ligand>
</feature>
<feature type="binding site" evidence="3">
    <location>
        <position position="60"/>
    </location>
    <ligand>
        <name>GTP</name>
        <dbReference type="ChEBI" id="CHEBI:37565"/>
    </ligand>
</feature>
<feature type="binding site" evidence="3">
    <location>
        <begin position="116"/>
        <end position="119"/>
    </location>
    <ligand>
        <name>GTP</name>
        <dbReference type="ChEBI" id="CHEBI:37565"/>
    </ligand>
</feature>
<feature type="modified residue" description="Cysteine methyl ester" evidence="3">
    <location>
        <position position="181"/>
    </location>
</feature>
<feature type="lipid moiety-binding region" description="S-geranylgeranyl cysteine" evidence="3">
    <location>
        <position position="181"/>
    </location>
</feature>
<protein>
    <recommendedName>
        <fullName>Ras-related protein Rap-1A</fullName>
        <ecNumber evidence="2">3.6.5.2</ecNumber>
    </recommendedName>
    <alternativeName>
        <fullName>GTP-binding protein smg p21A</fullName>
    </alternativeName>
</protein>
<evidence type="ECO:0000250" key="1"/>
<evidence type="ECO:0000250" key="2">
    <source>
        <dbReference type="UniProtKB" id="P61224"/>
    </source>
</evidence>
<evidence type="ECO:0000250" key="3">
    <source>
        <dbReference type="UniProtKB" id="P62834"/>
    </source>
</evidence>
<evidence type="ECO:0000250" key="4">
    <source>
        <dbReference type="UniProtKB" id="P62835"/>
    </source>
</evidence>
<evidence type="ECO:0000305" key="5"/>
<organism>
    <name type="scientific">Bos taurus</name>
    <name type="common">Bovine</name>
    <dbReference type="NCBI Taxonomy" id="9913"/>
    <lineage>
        <taxon>Eukaryota</taxon>
        <taxon>Metazoa</taxon>
        <taxon>Chordata</taxon>
        <taxon>Craniata</taxon>
        <taxon>Vertebrata</taxon>
        <taxon>Euteleostomi</taxon>
        <taxon>Mammalia</taxon>
        <taxon>Eutheria</taxon>
        <taxon>Laurasiatheria</taxon>
        <taxon>Artiodactyla</taxon>
        <taxon>Ruminantia</taxon>
        <taxon>Pecora</taxon>
        <taxon>Bovidae</taxon>
        <taxon>Bovinae</taxon>
        <taxon>Bos</taxon>
    </lineage>
</organism>
<keyword id="KW-0965">Cell junction</keyword>
<keyword id="KW-1003">Cell membrane</keyword>
<keyword id="KW-0963">Cytoplasm</keyword>
<keyword id="KW-0903">Direct protein sequencing</keyword>
<keyword id="KW-0967">Endosome</keyword>
<keyword id="KW-0342">GTP-binding</keyword>
<keyword id="KW-0378">Hydrolase</keyword>
<keyword id="KW-0449">Lipoprotein</keyword>
<keyword id="KW-0472">Membrane</keyword>
<keyword id="KW-0488">Methylation</keyword>
<keyword id="KW-0524">Neurogenesis</keyword>
<keyword id="KW-0547">Nucleotide-binding</keyword>
<keyword id="KW-0636">Prenylation</keyword>
<keyword id="KW-1185">Reference proteome</keyword>
<keyword id="KW-0043">Tumor suppressor</keyword>
<accession>P62833</accession>
<accession>A4IFG1</accession>
<accession>P10113</accession>
<dbReference type="EC" id="3.6.5.2" evidence="2"/>
<dbReference type="EMBL" id="J04196">
    <property type="protein sequence ID" value="AAA30415.1"/>
    <property type="molecule type" value="mRNA"/>
</dbReference>
<dbReference type="EMBL" id="BC134566">
    <property type="protein sequence ID" value="AAI34567.1"/>
    <property type="molecule type" value="mRNA"/>
</dbReference>
<dbReference type="PIR" id="A31961">
    <property type="entry name" value="A31961"/>
</dbReference>
<dbReference type="RefSeq" id="NP_776873.1">
    <property type="nucleotide sequence ID" value="NM_174448.5"/>
</dbReference>
<dbReference type="RefSeq" id="XP_010801456.1">
    <property type="nucleotide sequence ID" value="XM_010803154.3"/>
</dbReference>
<dbReference type="RefSeq" id="XP_024840481.1">
    <property type="nucleotide sequence ID" value="XM_024984713.2"/>
</dbReference>
<dbReference type="RefSeq" id="XP_059737646.1">
    <property type="nucleotide sequence ID" value="XM_059881663.1"/>
</dbReference>
<dbReference type="SMR" id="P62833"/>
<dbReference type="FunCoup" id="P62833">
    <property type="interactions" value="2595"/>
</dbReference>
<dbReference type="STRING" id="9913.ENSBTAP00000062154"/>
<dbReference type="PaxDb" id="9913-ENSBTAP00000019575"/>
<dbReference type="PeptideAtlas" id="P62833"/>
<dbReference type="Ensembl" id="ENSBTAT00000068678.1">
    <property type="protein sequence ID" value="ENSBTAP00000062154.1"/>
    <property type="gene ID" value="ENSBTAG00000050904.1"/>
</dbReference>
<dbReference type="GeneID" id="282031"/>
<dbReference type="KEGG" id="bta:282031"/>
<dbReference type="CTD" id="5906"/>
<dbReference type="VEuPathDB" id="HostDB:ENSBTAG00000050904"/>
<dbReference type="VGNC" id="VGNC:33715">
    <property type="gene designation" value="RAP1A"/>
</dbReference>
<dbReference type="eggNOG" id="KOG0395">
    <property type="taxonomic scope" value="Eukaryota"/>
</dbReference>
<dbReference type="GeneTree" id="ENSGT00940000160251"/>
<dbReference type="HOGENOM" id="CLU_041217_9_8_1"/>
<dbReference type="InParanoid" id="P62833"/>
<dbReference type="OMA" id="EYKLVVM"/>
<dbReference type="OrthoDB" id="5976022at2759"/>
<dbReference type="TreeFam" id="TF313014"/>
<dbReference type="Reactome" id="R-BTA-170968">
    <property type="pathway name" value="Frs2-mediated activation"/>
</dbReference>
<dbReference type="Reactome" id="R-BTA-170984">
    <property type="pathway name" value="ARMS-mediated activation"/>
</dbReference>
<dbReference type="Reactome" id="R-BTA-354192">
    <property type="pathway name" value="Integrin signaling"/>
</dbReference>
<dbReference type="Reactome" id="R-BTA-354194">
    <property type="pathway name" value="GRB2:SOS provides linkage to MAPK signaling for Integrins"/>
</dbReference>
<dbReference type="Reactome" id="R-BTA-372708">
    <property type="pathway name" value="p130Cas linkage to MAPK signaling for integrins"/>
</dbReference>
<dbReference type="Reactome" id="R-BTA-381676">
    <property type="pathway name" value="Glucagon-like Peptide-1 (GLP1) regulates insulin secretion"/>
</dbReference>
<dbReference type="Reactome" id="R-BTA-392517">
    <property type="pathway name" value="Rap1 signalling"/>
</dbReference>
<dbReference type="Reactome" id="R-BTA-5674135">
    <property type="pathway name" value="MAP2K and MAPK activation"/>
</dbReference>
<dbReference type="Reactome" id="R-BTA-6798695">
    <property type="pathway name" value="Neutrophil degranulation"/>
</dbReference>
<dbReference type="Reactome" id="R-BTA-8875555">
    <property type="pathway name" value="MET activates RAP1 and RAC1"/>
</dbReference>
<dbReference type="Proteomes" id="UP000009136">
    <property type="component" value="Chromosome 3"/>
</dbReference>
<dbReference type="Bgee" id="ENSBTAG00000050904">
    <property type="expression patterns" value="Expressed in trachea and 103 other cell types or tissues"/>
</dbReference>
<dbReference type="GO" id="GO:0070161">
    <property type="term" value="C:anchoring junction"/>
    <property type="evidence" value="ECO:0007669"/>
    <property type="project" value="UniProtKB-SubCell"/>
</dbReference>
<dbReference type="GO" id="GO:0030054">
    <property type="term" value="C:cell junction"/>
    <property type="evidence" value="ECO:0000250"/>
    <property type="project" value="UniProtKB"/>
</dbReference>
<dbReference type="GO" id="GO:0005737">
    <property type="term" value="C:cytoplasm"/>
    <property type="evidence" value="ECO:0000250"/>
    <property type="project" value="UniProtKB"/>
</dbReference>
<dbReference type="GO" id="GO:0005769">
    <property type="term" value="C:early endosome"/>
    <property type="evidence" value="ECO:0000250"/>
    <property type="project" value="UniProtKB"/>
</dbReference>
<dbReference type="GO" id="GO:0098978">
    <property type="term" value="C:glutamatergic synapse"/>
    <property type="evidence" value="ECO:0007669"/>
    <property type="project" value="Ensembl"/>
</dbReference>
<dbReference type="GO" id="GO:0032045">
    <property type="term" value="C:guanyl-nucleotide exchange factor complex"/>
    <property type="evidence" value="ECO:0007669"/>
    <property type="project" value="Ensembl"/>
</dbReference>
<dbReference type="GO" id="GO:0005770">
    <property type="term" value="C:late endosome"/>
    <property type="evidence" value="ECO:0000250"/>
    <property type="project" value="UniProtKB"/>
</dbReference>
<dbReference type="GO" id="GO:0043005">
    <property type="term" value="C:neuron projection"/>
    <property type="evidence" value="ECO:0007669"/>
    <property type="project" value="Ensembl"/>
</dbReference>
<dbReference type="GO" id="GO:0048471">
    <property type="term" value="C:perinuclear region of cytoplasm"/>
    <property type="evidence" value="ECO:0000250"/>
    <property type="project" value="UniProtKB"/>
</dbReference>
<dbReference type="GO" id="GO:0005886">
    <property type="term" value="C:plasma membrane"/>
    <property type="evidence" value="ECO:0000318"/>
    <property type="project" value="GO_Central"/>
</dbReference>
<dbReference type="GO" id="GO:0098793">
    <property type="term" value="C:presynapse"/>
    <property type="evidence" value="ECO:0007669"/>
    <property type="project" value="GOC"/>
</dbReference>
<dbReference type="GO" id="GO:0097225">
    <property type="term" value="C:sperm midpiece"/>
    <property type="evidence" value="ECO:0000250"/>
    <property type="project" value="UniProtKB"/>
</dbReference>
<dbReference type="GO" id="GO:0003925">
    <property type="term" value="F:G protein activity"/>
    <property type="evidence" value="ECO:0007669"/>
    <property type="project" value="UniProtKB-EC"/>
</dbReference>
<dbReference type="GO" id="GO:0019003">
    <property type="term" value="F:GDP binding"/>
    <property type="evidence" value="ECO:0000318"/>
    <property type="project" value="GO_Central"/>
</dbReference>
<dbReference type="GO" id="GO:0005525">
    <property type="term" value="F:GTP binding"/>
    <property type="evidence" value="ECO:0000318"/>
    <property type="project" value="GO_Central"/>
</dbReference>
<dbReference type="GO" id="GO:0003924">
    <property type="term" value="F:GTPase activity"/>
    <property type="evidence" value="ECO:0000318"/>
    <property type="project" value="GO_Central"/>
</dbReference>
<dbReference type="GO" id="GO:0005085">
    <property type="term" value="F:guanyl-nucleotide exchange factor activity"/>
    <property type="evidence" value="ECO:0000250"/>
    <property type="project" value="UniProtKB"/>
</dbReference>
<dbReference type="GO" id="GO:0044877">
    <property type="term" value="F:protein-containing complex binding"/>
    <property type="evidence" value="ECO:0007669"/>
    <property type="project" value="Ensembl"/>
</dbReference>
<dbReference type="GO" id="GO:0031267">
    <property type="term" value="F:small GTPase binding"/>
    <property type="evidence" value="ECO:0007669"/>
    <property type="project" value="Ensembl"/>
</dbReference>
<dbReference type="GO" id="GO:0071320">
    <property type="term" value="P:cellular response to cAMP"/>
    <property type="evidence" value="ECO:0000250"/>
    <property type="project" value="UniProtKB"/>
</dbReference>
<dbReference type="GO" id="GO:1990090">
    <property type="term" value="P:cellular response to nerve growth factor stimulus"/>
    <property type="evidence" value="ECO:0000250"/>
    <property type="project" value="UniProtKB"/>
</dbReference>
<dbReference type="GO" id="GO:0061028">
    <property type="term" value="P:establishment of endothelial barrier"/>
    <property type="evidence" value="ECO:0000250"/>
    <property type="project" value="UniProtKB"/>
</dbReference>
<dbReference type="GO" id="GO:2000301">
    <property type="term" value="P:negative regulation of synaptic vesicle exocytosis"/>
    <property type="evidence" value="ECO:0000318"/>
    <property type="project" value="GO_Central"/>
</dbReference>
<dbReference type="GO" id="GO:0038180">
    <property type="term" value="P:nerve growth factor signaling pathway"/>
    <property type="evidence" value="ECO:0000250"/>
    <property type="project" value="UniProtKB"/>
</dbReference>
<dbReference type="GO" id="GO:0007399">
    <property type="term" value="P:nervous system development"/>
    <property type="evidence" value="ECO:0007669"/>
    <property type="project" value="UniProtKB-KW"/>
</dbReference>
<dbReference type="GO" id="GO:0070374">
    <property type="term" value="P:positive regulation of ERK1 and ERK2 cascade"/>
    <property type="evidence" value="ECO:0000250"/>
    <property type="project" value="UniProtKB"/>
</dbReference>
<dbReference type="GO" id="GO:0043547">
    <property type="term" value="P:positive regulation of GTPase activity"/>
    <property type="evidence" value="ECO:0000250"/>
    <property type="project" value="UniProtKB"/>
</dbReference>
<dbReference type="GO" id="GO:0010976">
    <property type="term" value="P:positive regulation of neuron projection development"/>
    <property type="evidence" value="ECO:0000250"/>
    <property type="project" value="UniProtKB"/>
</dbReference>
<dbReference type="GO" id="GO:0045860">
    <property type="term" value="P:positive regulation of protein kinase activity"/>
    <property type="evidence" value="ECO:0000250"/>
    <property type="project" value="UniProtKB"/>
</dbReference>
<dbReference type="GO" id="GO:2001214">
    <property type="term" value="P:positive regulation of vasculogenesis"/>
    <property type="evidence" value="ECO:0000250"/>
    <property type="project" value="UniProtKB"/>
</dbReference>
<dbReference type="GO" id="GO:0072659">
    <property type="term" value="P:protein localization to plasma membrane"/>
    <property type="evidence" value="ECO:0000250"/>
    <property type="project" value="UniProtKB"/>
</dbReference>
<dbReference type="GO" id="GO:0032486">
    <property type="term" value="P:Rap protein signal transduction"/>
    <property type="evidence" value="ECO:0000250"/>
    <property type="project" value="UniProtKB"/>
</dbReference>
<dbReference type="GO" id="GO:1901888">
    <property type="term" value="P:regulation of cell junction assembly"/>
    <property type="evidence" value="ECO:0000250"/>
    <property type="project" value="UniProtKB"/>
</dbReference>
<dbReference type="GO" id="GO:0098696">
    <property type="term" value="P:regulation of neurotransmitter receptor localization to postsynaptic specialization membrane"/>
    <property type="evidence" value="ECO:0007669"/>
    <property type="project" value="Ensembl"/>
</dbReference>
<dbReference type="GO" id="GO:0016079">
    <property type="term" value="P:synaptic vesicle exocytosis"/>
    <property type="evidence" value="ECO:0007669"/>
    <property type="project" value="Ensembl"/>
</dbReference>
<dbReference type="CDD" id="cd04175">
    <property type="entry name" value="Rap1"/>
    <property type="match status" value="1"/>
</dbReference>
<dbReference type="FunFam" id="3.40.50.300:FF:000182">
    <property type="entry name" value="ras-related protein Rap-1b"/>
    <property type="match status" value="1"/>
</dbReference>
<dbReference type="Gene3D" id="3.40.50.300">
    <property type="entry name" value="P-loop containing nucleotide triphosphate hydrolases"/>
    <property type="match status" value="1"/>
</dbReference>
<dbReference type="InterPro" id="IPR027417">
    <property type="entry name" value="P-loop_NTPase"/>
</dbReference>
<dbReference type="InterPro" id="IPR038851">
    <property type="entry name" value="Rap1"/>
</dbReference>
<dbReference type="InterPro" id="IPR005225">
    <property type="entry name" value="Small_GTP-bd"/>
</dbReference>
<dbReference type="InterPro" id="IPR001806">
    <property type="entry name" value="Small_GTPase"/>
</dbReference>
<dbReference type="InterPro" id="IPR020849">
    <property type="entry name" value="Small_GTPase_Ras-type"/>
</dbReference>
<dbReference type="NCBIfam" id="TIGR00231">
    <property type="entry name" value="small_GTP"/>
    <property type="match status" value="1"/>
</dbReference>
<dbReference type="PANTHER" id="PTHR24070">
    <property type="entry name" value="RAS, DI-RAS, AND RHEB FAMILY MEMBERS OF SMALL GTPASE SUPERFAMILY"/>
    <property type="match status" value="1"/>
</dbReference>
<dbReference type="Pfam" id="PF00071">
    <property type="entry name" value="Ras"/>
    <property type="match status" value="1"/>
</dbReference>
<dbReference type="PRINTS" id="PR00449">
    <property type="entry name" value="RASTRNSFRMNG"/>
</dbReference>
<dbReference type="SMART" id="SM00175">
    <property type="entry name" value="RAB"/>
    <property type="match status" value="1"/>
</dbReference>
<dbReference type="SMART" id="SM00176">
    <property type="entry name" value="RAN"/>
    <property type="match status" value="1"/>
</dbReference>
<dbReference type="SMART" id="SM00173">
    <property type="entry name" value="RAS"/>
    <property type="match status" value="1"/>
</dbReference>
<dbReference type="SMART" id="SM00174">
    <property type="entry name" value="RHO"/>
    <property type="match status" value="1"/>
</dbReference>
<dbReference type="SUPFAM" id="SSF52540">
    <property type="entry name" value="P-loop containing nucleoside triphosphate hydrolases"/>
    <property type="match status" value="1"/>
</dbReference>
<dbReference type="PROSITE" id="PS51421">
    <property type="entry name" value="RAS"/>
    <property type="match status" value="1"/>
</dbReference>
<gene>
    <name type="primary">RAP1A</name>
</gene>
<reference key="1">
    <citation type="journal article" date="1988" name="J. Biol. Chem.">
        <title>A novel small molecular weight GTP-binding protein with the same putative effector domain as the ras proteins in bovine brain membranes. Purification, determination of primary structure, and characterization.</title>
        <authorList>
            <person name="Kawata M."/>
            <person name="Matsui Y."/>
            <person name="Kondo J."/>
            <person name="Hishida T."/>
            <person name="Teranishi Y."/>
            <person name="Takai Y."/>
        </authorList>
    </citation>
    <scope>NUCLEOTIDE SEQUENCE [MRNA]</scope>
    <scope>CHARACTERIZATION</scope>
</reference>
<reference key="2">
    <citation type="submission" date="2007-03" db="EMBL/GenBank/DDBJ databases">
        <authorList>
            <consortium name="NIH - Mammalian Gene Collection (MGC) project"/>
        </authorList>
    </citation>
    <scope>NUCLEOTIDE SEQUENCE [LARGE SCALE MRNA]</scope>
    <source>
        <strain>Hereford</strain>
        <tissue>Basal ganglia</tissue>
    </source>
</reference>
<reference key="3">
    <citation type="journal article" date="1991" name="Oncogene">
        <title>The molecular heterogeneity of the smg-21/Krev-1/rap1 proteins, a GTP-binding protein having the same effector domain as ras p21s, in bovine aortic smooth muscle membranes.</title>
        <authorList>
            <person name="Kawata M."/>
            <person name="Kawahara Y."/>
            <person name="Sunako M."/>
            <person name="Araki S."/>
            <person name="Koide M."/>
            <person name="Tsuda T."/>
            <person name="Fukuzaki H."/>
            <person name="Takai Y."/>
        </authorList>
    </citation>
    <scope>PROTEIN SEQUENCE OF 130-145 AND 169-173</scope>
</reference>
<sequence length="184" mass="20987">MREYKLVVLGSGGVGKSALTVQFVQGIFVEKYDPTIEDSYRKQVEVDCQQCMLEILDTAGTEQFTAMRDLYMKNGQGFALVYSITAQSTFNDLQDLREQILRVKDTEDVPMILVGNKCDLEDERVVGKEQGQNLARQWCNCAFLESSAKSKINVNEIFYDLVRQINRKTPVEKKKPKKKSCLLL</sequence>